<accession>Q57QM1</accession>
<feature type="chain" id="PRO_0000228696" description="Probable phosphatase YcdX">
    <location>
        <begin position="1"/>
        <end position="245"/>
    </location>
</feature>
<feature type="binding site" evidence="1">
    <location>
        <position position="7"/>
    </location>
    <ligand>
        <name>Zn(2+)</name>
        <dbReference type="ChEBI" id="CHEBI:29105"/>
        <label>1</label>
    </ligand>
</feature>
<feature type="binding site" evidence="1">
    <location>
        <position position="9"/>
    </location>
    <ligand>
        <name>Zn(2+)</name>
        <dbReference type="ChEBI" id="CHEBI:29105"/>
        <label>1</label>
    </ligand>
</feature>
<feature type="binding site" evidence="1">
    <location>
        <position position="15"/>
    </location>
    <ligand>
        <name>Zn(2+)</name>
        <dbReference type="ChEBI" id="CHEBI:29105"/>
        <label>2</label>
    </ligand>
</feature>
<feature type="binding site" evidence="1">
    <location>
        <position position="40"/>
    </location>
    <ligand>
        <name>Zn(2+)</name>
        <dbReference type="ChEBI" id="CHEBI:29105"/>
        <label>2</label>
    </ligand>
</feature>
<feature type="binding site" evidence="1">
    <location>
        <position position="73"/>
    </location>
    <ligand>
        <name>Zn(2+)</name>
        <dbReference type="ChEBI" id="CHEBI:29105"/>
        <label>1</label>
    </ligand>
</feature>
<feature type="binding site" evidence="1">
    <location>
        <position position="73"/>
    </location>
    <ligand>
        <name>Zn(2+)</name>
        <dbReference type="ChEBI" id="CHEBI:29105"/>
        <label>3</label>
    </ligand>
</feature>
<feature type="binding site" evidence="1">
    <location>
        <position position="101"/>
    </location>
    <ligand>
        <name>Zn(2+)</name>
        <dbReference type="ChEBI" id="CHEBI:29105"/>
        <label>3</label>
    </ligand>
</feature>
<feature type="binding site" evidence="1">
    <location>
        <position position="131"/>
    </location>
    <ligand>
        <name>Zn(2+)</name>
        <dbReference type="ChEBI" id="CHEBI:29105"/>
        <label>3</label>
    </ligand>
</feature>
<feature type="binding site" evidence="1">
    <location>
        <position position="192"/>
    </location>
    <ligand>
        <name>Zn(2+)</name>
        <dbReference type="ChEBI" id="CHEBI:29105"/>
        <label>1</label>
    </ligand>
</feature>
<feature type="binding site" evidence="1">
    <location>
        <position position="194"/>
    </location>
    <ligand>
        <name>Zn(2+)</name>
        <dbReference type="ChEBI" id="CHEBI:29105"/>
        <label>2</label>
    </ligand>
</feature>
<dbReference type="EC" id="3.1.3.-" evidence="1"/>
<dbReference type="EMBL" id="AE017220">
    <property type="protein sequence ID" value="AAX64990.1"/>
    <property type="molecule type" value="Genomic_DNA"/>
</dbReference>
<dbReference type="RefSeq" id="WP_000283643.1">
    <property type="nucleotide sequence ID" value="NC_006905.1"/>
</dbReference>
<dbReference type="SMR" id="Q57QM1"/>
<dbReference type="KEGG" id="sec:SCH_1084"/>
<dbReference type="HOGENOM" id="CLU_061999_0_1_6"/>
<dbReference type="Proteomes" id="UP000000538">
    <property type="component" value="Chromosome"/>
</dbReference>
<dbReference type="GO" id="GO:0005829">
    <property type="term" value="C:cytosol"/>
    <property type="evidence" value="ECO:0007669"/>
    <property type="project" value="TreeGrafter"/>
</dbReference>
<dbReference type="GO" id="GO:0016791">
    <property type="term" value="F:phosphatase activity"/>
    <property type="evidence" value="ECO:0007669"/>
    <property type="project" value="UniProtKB-UniRule"/>
</dbReference>
<dbReference type="GO" id="GO:0008270">
    <property type="term" value="F:zinc ion binding"/>
    <property type="evidence" value="ECO:0007669"/>
    <property type="project" value="UniProtKB-UniRule"/>
</dbReference>
<dbReference type="GO" id="GO:0071978">
    <property type="term" value="P:bacterial-type flagellum-dependent swarming motility"/>
    <property type="evidence" value="ECO:0007669"/>
    <property type="project" value="TreeGrafter"/>
</dbReference>
<dbReference type="CDD" id="cd07437">
    <property type="entry name" value="PHP_HisPPase_Ycdx_like"/>
    <property type="match status" value="1"/>
</dbReference>
<dbReference type="FunFam" id="3.20.20.140:FF:000008">
    <property type="entry name" value="Probable phosphatase YcdX"/>
    <property type="match status" value="1"/>
</dbReference>
<dbReference type="Gene3D" id="3.20.20.140">
    <property type="entry name" value="Metal-dependent hydrolases"/>
    <property type="match status" value="1"/>
</dbReference>
<dbReference type="HAMAP" id="MF_01561">
    <property type="entry name" value="YcdX_phosphat"/>
    <property type="match status" value="1"/>
</dbReference>
<dbReference type="InterPro" id="IPR023710">
    <property type="entry name" value="Phosphatase_YcdX_put"/>
</dbReference>
<dbReference type="InterPro" id="IPR004013">
    <property type="entry name" value="PHP_dom"/>
</dbReference>
<dbReference type="InterPro" id="IPR050243">
    <property type="entry name" value="PHP_phosphatase"/>
</dbReference>
<dbReference type="InterPro" id="IPR003141">
    <property type="entry name" value="Pol/His_phosphatase_N"/>
</dbReference>
<dbReference type="InterPro" id="IPR016195">
    <property type="entry name" value="Pol/histidinol_Pase-like"/>
</dbReference>
<dbReference type="NCBIfam" id="NF006702">
    <property type="entry name" value="PRK09248.1"/>
    <property type="match status" value="1"/>
</dbReference>
<dbReference type="PANTHER" id="PTHR36928">
    <property type="entry name" value="PHOSPHATASE YCDX-RELATED"/>
    <property type="match status" value="1"/>
</dbReference>
<dbReference type="PANTHER" id="PTHR36928:SF1">
    <property type="entry name" value="PHOSPHATASE YCDX-RELATED"/>
    <property type="match status" value="1"/>
</dbReference>
<dbReference type="Pfam" id="PF02811">
    <property type="entry name" value="PHP"/>
    <property type="match status" value="1"/>
</dbReference>
<dbReference type="SMART" id="SM00481">
    <property type="entry name" value="POLIIIAc"/>
    <property type="match status" value="1"/>
</dbReference>
<dbReference type="SUPFAM" id="SSF89550">
    <property type="entry name" value="PHP domain-like"/>
    <property type="match status" value="1"/>
</dbReference>
<sequence length="245" mass="26906">MYPVDLHMHTVASTHAYSTLSDYIAEAKRKGIKLFAITDHGPDMEDAPHHWHFINMRIWPRLVDGVGILRGIEANIKNINGEIDCSGKMFDSLDLIIAGFHEPVFAPHDKETNTQAMIATIASGKVHIISHPGNPKYPVEVKAIAQAAAKHHVALEINNSSFLHSRKGSEDNCRAVAAAVRDAGGWVALGSDSHTAFTLGDFTECRKILDAVNFPEDRILNVSPQRLLAFLESRGMAPVPEFAEL</sequence>
<protein>
    <recommendedName>
        <fullName evidence="1">Probable phosphatase YcdX</fullName>
        <ecNumber evidence="1">3.1.3.-</ecNumber>
    </recommendedName>
</protein>
<evidence type="ECO:0000255" key="1">
    <source>
        <dbReference type="HAMAP-Rule" id="MF_01561"/>
    </source>
</evidence>
<name>YCDX_SALCH</name>
<gene>
    <name evidence="1" type="primary">ycdX</name>
    <name type="ordered locus">SCH_1084</name>
</gene>
<proteinExistence type="inferred from homology"/>
<organism>
    <name type="scientific">Salmonella choleraesuis (strain SC-B67)</name>
    <dbReference type="NCBI Taxonomy" id="321314"/>
    <lineage>
        <taxon>Bacteria</taxon>
        <taxon>Pseudomonadati</taxon>
        <taxon>Pseudomonadota</taxon>
        <taxon>Gammaproteobacteria</taxon>
        <taxon>Enterobacterales</taxon>
        <taxon>Enterobacteriaceae</taxon>
        <taxon>Salmonella</taxon>
    </lineage>
</organism>
<keyword id="KW-0378">Hydrolase</keyword>
<keyword id="KW-0479">Metal-binding</keyword>
<keyword id="KW-0862">Zinc</keyword>
<comment type="cofactor">
    <cofactor evidence="1">
        <name>Zn(2+)</name>
        <dbReference type="ChEBI" id="CHEBI:29105"/>
    </cofactor>
    <text evidence="1">Binds 3 Zn(2+) ions per subunit.</text>
</comment>
<comment type="subunit">
    <text evidence="1">Homotrimer.</text>
</comment>
<comment type="similarity">
    <text evidence="1">Belongs to the PHP family.</text>
</comment>
<reference key="1">
    <citation type="journal article" date="2005" name="Nucleic Acids Res.">
        <title>The genome sequence of Salmonella enterica serovar Choleraesuis, a highly invasive and resistant zoonotic pathogen.</title>
        <authorList>
            <person name="Chiu C.-H."/>
            <person name="Tang P."/>
            <person name="Chu C."/>
            <person name="Hu S."/>
            <person name="Bao Q."/>
            <person name="Yu J."/>
            <person name="Chou Y.-Y."/>
            <person name="Wang H.-S."/>
            <person name="Lee Y.-S."/>
        </authorList>
    </citation>
    <scope>NUCLEOTIDE SEQUENCE [LARGE SCALE GENOMIC DNA]</scope>
    <source>
        <strain>SC-B67</strain>
    </source>
</reference>